<organism>
    <name type="scientific">Francisella tularensis subsp. holarctica (strain LVS)</name>
    <dbReference type="NCBI Taxonomy" id="376619"/>
    <lineage>
        <taxon>Bacteria</taxon>
        <taxon>Pseudomonadati</taxon>
        <taxon>Pseudomonadota</taxon>
        <taxon>Gammaproteobacteria</taxon>
        <taxon>Thiotrichales</taxon>
        <taxon>Francisellaceae</taxon>
        <taxon>Francisella</taxon>
    </lineage>
</organism>
<sequence>MNYSKAKYIMGAAKVSQLPEDTGVEVAFAGRSNAGKSSALNTLTDQKGLARVSKTPGRTQLINLFDLGNNNRLVDLPGYGYAKVSESIKRQWQSEMENYLTSRKCLNGIVLLVDSRHELKEFDSLMIEMAISFDLNLHILLTKADKLNNKERAQANRMIESFLKTFVSTDKISYQLFSSLTKMGLDKFKEKLDTWYQ</sequence>
<name>ENGB_FRATH</name>
<protein>
    <recommendedName>
        <fullName evidence="1">Probable GTP-binding protein EngB</fullName>
    </recommendedName>
</protein>
<accession>Q2A3S7</accession>
<gene>
    <name evidence="1" type="primary">engB</name>
    <name type="ordered locus">FTL_0906</name>
</gene>
<feature type="chain" id="PRO_0000266862" description="Probable GTP-binding protein EngB">
    <location>
        <begin position="1"/>
        <end position="197"/>
    </location>
</feature>
<feature type="domain" description="EngB-type G" evidence="1">
    <location>
        <begin position="22"/>
        <end position="197"/>
    </location>
</feature>
<feature type="binding site" evidence="1">
    <location>
        <begin position="30"/>
        <end position="37"/>
    </location>
    <ligand>
        <name>GTP</name>
        <dbReference type="ChEBI" id="CHEBI:37565"/>
    </ligand>
</feature>
<feature type="binding site" evidence="1">
    <location>
        <position position="37"/>
    </location>
    <ligand>
        <name>Mg(2+)</name>
        <dbReference type="ChEBI" id="CHEBI:18420"/>
    </ligand>
</feature>
<feature type="binding site" evidence="1">
    <location>
        <begin position="57"/>
        <end position="61"/>
    </location>
    <ligand>
        <name>GTP</name>
        <dbReference type="ChEBI" id="CHEBI:37565"/>
    </ligand>
</feature>
<feature type="binding site" evidence="1">
    <location>
        <position position="59"/>
    </location>
    <ligand>
        <name>Mg(2+)</name>
        <dbReference type="ChEBI" id="CHEBI:18420"/>
    </ligand>
</feature>
<feature type="binding site" evidence="1">
    <location>
        <begin position="75"/>
        <end position="78"/>
    </location>
    <ligand>
        <name>GTP</name>
        <dbReference type="ChEBI" id="CHEBI:37565"/>
    </ligand>
</feature>
<feature type="binding site" evidence="1">
    <location>
        <begin position="142"/>
        <end position="145"/>
    </location>
    <ligand>
        <name>GTP</name>
        <dbReference type="ChEBI" id="CHEBI:37565"/>
    </ligand>
</feature>
<feature type="binding site" evidence="1">
    <location>
        <begin position="177"/>
        <end position="179"/>
    </location>
    <ligand>
        <name>GTP</name>
        <dbReference type="ChEBI" id="CHEBI:37565"/>
    </ligand>
</feature>
<dbReference type="EMBL" id="AM233362">
    <property type="protein sequence ID" value="CAJ79345.1"/>
    <property type="molecule type" value="Genomic_DNA"/>
</dbReference>
<dbReference type="SMR" id="Q2A3S7"/>
<dbReference type="KEGG" id="ftl:FTL_0906"/>
<dbReference type="Proteomes" id="UP000001944">
    <property type="component" value="Chromosome"/>
</dbReference>
<dbReference type="GO" id="GO:0005829">
    <property type="term" value="C:cytosol"/>
    <property type="evidence" value="ECO:0007669"/>
    <property type="project" value="TreeGrafter"/>
</dbReference>
<dbReference type="GO" id="GO:0005525">
    <property type="term" value="F:GTP binding"/>
    <property type="evidence" value="ECO:0007669"/>
    <property type="project" value="UniProtKB-UniRule"/>
</dbReference>
<dbReference type="GO" id="GO:0046872">
    <property type="term" value="F:metal ion binding"/>
    <property type="evidence" value="ECO:0007669"/>
    <property type="project" value="UniProtKB-KW"/>
</dbReference>
<dbReference type="GO" id="GO:0000917">
    <property type="term" value="P:division septum assembly"/>
    <property type="evidence" value="ECO:0007669"/>
    <property type="project" value="UniProtKB-KW"/>
</dbReference>
<dbReference type="CDD" id="cd01876">
    <property type="entry name" value="YihA_EngB"/>
    <property type="match status" value="1"/>
</dbReference>
<dbReference type="FunFam" id="3.40.50.300:FF:000098">
    <property type="entry name" value="Probable GTP-binding protein EngB"/>
    <property type="match status" value="1"/>
</dbReference>
<dbReference type="Gene3D" id="3.40.50.300">
    <property type="entry name" value="P-loop containing nucleotide triphosphate hydrolases"/>
    <property type="match status" value="1"/>
</dbReference>
<dbReference type="HAMAP" id="MF_00321">
    <property type="entry name" value="GTPase_EngB"/>
    <property type="match status" value="1"/>
</dbReference>
<dbReference type="InterPro" id="IPR030393">
    <property type="entry name" value="G_ENGB_dom"/>
</dbReference>
<dbReference type="InterPro" id="IPR006073">
    <property type="entry name" value="GTP-bd"/>
</dbReference>
<dbReference type="InterPro" id="IPR019987">
    <property type="entry name" value="GTP-bd_ribosome_bio_YsxC"/>
</dbReference>
<dbReference type="InterPro" id="IPR027417">
    <property type="entry name" value="P-loop_NTPase"/>
</dbReference>
<dbReference type="NCBIfam" id="TIGR03598">
    <property type="entry name" value="GTPase_YsxC"/>
    <property type="match status" value="1"/>
</dbReference>
<dbReference type="PANTHER" id="PTHR11649:SF13">
    <property type="entry name" value="ENGB-TYPE G DOMAIN-CONTAINING PROTEIN"/>
    <property type="match status" value="1"/>
</dbReference>
<dbReference type="PANTHER" id="PTHR11649">
    <property type="entry name" value="MSS1/TRME-RELATED GTP-BINDING PROTEIN"/>
    <property type="match status" value="1"/>
</dbReference>
<dbReference type="Pfam" id="PF01926">
    <property type="entry name" value="MMR_HSR1"/>
    <property type="match status" value="1"/>
</dbReference>
<dbReference type="SUPFAM" id="SSF52540">
    <property type="entry name" value="P-loop containing nucleoside triphosphate hydrolases"/>
    <property type="match status" value="1"/>
</dbReference>
<dbReference type="PROSITE" id="PS51706">
    <property type="entry name" value="G_ENGB"/>
    <property type="match status" value="1"/>
</dbReference>
<keyword id="KW-0131">Cell cycle</keyword>
<keyword id="KW-0132">Cell division</keyword>
<keyword id="KW-0342">GTP-binding</keyword>
<keyword id="KW-0460">Magnesium</keyword>
<keyword id="KW-0479">Metal-binding</keyword>
<keyword id="KW-0547">Nucleotide-binding</keyword>
<keyword id="KW-1185">Reference proteome</keyword>
<keyword id="KW-0717">Septation</keyword>
<proteinExistence type="inferred from homology"/>
<comment type="function">
    <text evidence="1">Necessary for normal cell division and for the maintenance of normal septation.</text>
</comment>
<comment type="cofactor">
    <cofactor evidence="1">
        <name>Mg(2+)</name>
        <dbReference type="ChEBI" id="CHEBI:18420"/>
    </cofactor>
</comment>
<comment type="similarity">
    <text evidence="1">Belongs to the TRAFAC class TrmE-Era-EngA-EngB-Septin-like GTPase superfamily. EngB GTPase family.</text>
</comment>
<reference key="1">
    <citation type="submission" date="2006-03" db="EMBL/GenBank/DDBJ databases">
        <title>Complete genome sequence of Francisella tularensis LVS (Live Vaccine Strain).</title>
        <authorList>
            <person name="Chain P."/>
            <person name="Larimer F."/>
            <person name="Land M."/>
            <person name="Stilwagen S."/>
            <person name="Larsson P."/>
            <person name="Bearden S."/>
            <person name="Chu M."/>
            <person name="Oyston P."/>
            <person name="Forsman M."/>
            <person name="Andersson S."/>
            <person name="Lindler L."/>
            <person name="Titball R."/>
            <person name="Garcia E."/>
        </authorList>
    </citation>
    <scope>NUCLEOTIDE SEQUENCE [LARGE SCALE GENOMIC DNA]</scope>
    <source>
        <strain>LVS</strain>
    </source>
</reference>
<evidence type="ECO:0000255" key="1">
    <source>
        <dbReference type="HAMAP-Rule" id="MF_00321"/>
    </source>
</evidence>